<name>NADE_SHEDO</name>
<gene>
    <name evidence="1" type="primary">nadE</name>
    <name type="ordered locus">Sden_1432</name>
</gene>
<evidence type="ECO:0000255" key="1">
    <source>
        <dbReference type="HAMAP-Rule" id="MF_00193"/>
    </source>
</evidence>
<feature type="chain" id="PRO_1000077601" description="NH(3)-dependent NAD(+) synthetase">
    <location>
        <begin position="1"/>
        <end position="275"/>
    </location>
</feature>
<feature type="binding site" evidence="1">
    <location>
        <begin position="43"/>
        <end position="50"/>
    </location>
    <ligand>
        <name>ATP</name>
        <dbReference type="ChEBI" id="CHEBI:30616"/>
    </ligand>
</feature>
<feature type="binding site" evidence="1">
    <location>
        <position position="49"/>
    </location>
    <ligand>
        <name>Mg(2+)</name>
        <dbReference type="ChEBI" id="CHEBI:18420"/>
    </ligand>
</feature>
<feature type="binding site" evidence="1">
    <location>
        <position position="145"/>
    </location>
    <ligand>
        <name>deamido-NAD(+)</name>
        <dbReference type="ChEBI" id="CHEBI:58437"/>
    </ligand>
</feature>
<feature type="binding site" evidence="1">
    <location>
        <position position="165"/>
    </location>
    <ligand>
        <name>ATP</name>
        <dbReference type="ChEBI" id="CHEBI:30616"/>
    </ligand>
</feature>
<feature type="binding site" evidence="1">
    <location>
        <position position="170"/>
    </location>
    <ligand>
        <name>Mg(2+)</name>
        <dbReference type="ChEBI" id="CHEBI:18420"/>
    </ligand>
</feature>
<feature type="binding site" evidence="1">
    <location>
        <position position="178"/>
    </location>
    <ligand>
        <name>deamido-NAD(+)</name>
        <dbReference type="ChEBI" id="CHEBI:58437"/>
    </ligand>
</feature>
<feature type="binding site" evidence="1">
    <location>
        <position position="185"/>
    </location>
    <ligand>
        <name>deamido-NAD(+)</name>
        <dbReference type="ChEBI" id="CHEBI:58437"/>
    </ligand>
</feature>
<feature type="binding site" evidence="1">
    <location>
        <position position="194"/>
    </location>
    <ligand>
        <name>ATP</name>
        <dbReference type="ChEBI" id="CHEBI:30616"/>
    </ligand>
</feature>
<feature type="binding site" evidence="1">
    <location>
        <position position="216"/>
    </location>
    <ligand>
        <name>ATP</name>
        <dbReference type="ChEBI" id="CHEBI:30616"/>
    </ligand>
</feature>
<feature type="binding site" evidence="1">
    <location>
        <begin position="265"/>
        <end position="266"/>
    </location>
    <ligand>
        <name>deamido-NAD(+)</name>
        <dbReference type="ChEBI" id="CHEBI:58437"/>
    </ligand>
</feature>
<keyword id="KW-0067">ATP-binding</keyword>
<keyword id="KW-0436">Ligase</keyword>
<keyword id="KW-0460">Magnesium</keyword>
<keyword id="KW-0479">Metal-binding</keyword>
<keyword id="KW-0520">NAD</keyword>
<keyword id="KW-0547">Nucleotide-binding</keyword>
<keyword id="KW-1185">Reference proteome</keyword>
<dbReference type="EC" id="6.3.1.5" evidence="1"/>
<dbReference type="EMBL" id="CP000302">
    <property type="protein sequence ID" value="ABE54718.1"/>
    <property type="molecule type" value="Genomic_DNA"/>
</dbReference>
<dbReference type="RefSeq" id="WP_011495876.1">
    <property type="nucleotide sequence ID" value="NC_007954.1"/>
</dbReference>
<dbReference type="SMR" id="Q12PA8"/>
<dbReference type="STRING" id="318161.Sden_1432"/>
<dbReference type="KEGG" id="sdn:Sden_1432"/>
<dbReference type="eggNOG" id="COG0171">
    <property type="taxonomic scope" value="Bacteria"/>
</dbReference>
<dbReference type="HOGENOM" id="CLU_059327_3_0_6"/>
<dbReference type="OrthoDB" id="3266517at2"/>
<dbReference type="UniPathway" id="UPA00253">
    <property type="reaction ID" value="UER00333"/>
</dbReference>
<dbReference type="Proteomes" id="UP000001982">
    <property type="component" value="Chromosome"/>
</dbReference>
<dbReference type="GO" id="GO:0005737">
    <property type="term" value="C:cytoplasm"/>
    <property type="evidence" value="ECO:0007669"/>
    <property type="project" value="InterPro"/>
</dbReference>
<dbReference type="GO" id="GO:0005524">
    <property type="term" value="F:ATP binding"/>
    <property type="evidence" value="ECO:0007669"/>
    <property type="project" value="UniProtKB-UniRule"/>
</dbReference>
<dbReference type="GO" id="GO:0004359">
    <property type="term" value="F:glutaminase activity"/>
    <property type="evidence" value="ECO:0007669"/>
    <property type="project" value="InterPro"/>
</dbReference>
<dbReference type="GO" id="GO:0046872">
    <property type="term" value="F:metal ion binding"/>
    <property type="evidence" value="ECO:0007669"/>
    <property type="project" value="UniProtKB-KW"/>
</dbReference>
<dbReference type="GO" id="GO:0003952">
    <property type="term" value="F:NAD+ synthase (glutamine-hydrolyzing) activity"/>
    <property type="evidence" value="ECO:0007669"/>
    <property type="project" value="InterPro"/>
</dbReference>
<dbReference type="GO" id="GO:0008795">
    <property type="term" value="F:NAD+ synthase activity"/>
    <property type="evidence" value="ECO:0007669"/>
    <property type="project" value="UniProtKB-UniRule"/>
</dbReference>
<dbReference type="GO" id="GO:0009435">
    <property type="term" value="P:NAD biosynthetic process"/>
    <property type="evidence" value="ECO:0007669"/>
    <property type="project" value="UniProtKB-UniRule"/>
</dbReference>
<dbReference type="CDD" id="cd00553">
    <property type="entry name" value="NAD_synthase"/>
    <property type="match status" value="1"/>
</dbReference>
<dbReference type="FunFam" id="3.40.50.620:FF:000015">
    <property type="entry name" value="NH(3)-dependent NAD(+) synthetase"/>
    <property type="match status" value="1"/>
</dbReference>
<dbReference type="Gene3D" id="3.40.50.620">
    <property type="entry name" value="HUPs"/>
    <property type="match status" value="1"/>
</dbReference>
<dbReference type="HAMAP" id="MF_00193">
    <property type="entry name" value="NadE_ammonia_dep"/>
    <property type="match status" value="1"/>
</dbReference>
<dbReference type="InterPro" id="IPR022310">
    <property type="entry name" value="NAD/GMP_synthase"/>
</dbReference>
<dbReference type="InterPro" id="IPR003694">
    <property type="entry name" value="NAD_synthase"/>
</dbReference>
<dbReference type="InterPro" id="IPR022926">
    <property type="entry name" value="NH(3)-dep_NAD(+)_synth"/>
</dbReference>
<dbReference type="InterPro" id="IPR014729">
    <property type="entry name" value="Rossmann-like_a/b/a_fold"/>
</dbReference>
<dbReference type="NCBIfam" id="TIGR00552">
    <property type="entry name" value="nadE"/>
    <property type="match status" value="1"/>
</dbReference>
<dbReference type="NCBIfam" id="NF001979">
    <property type="entry name" value="PRK00768.1"/>
    <property type="match status" value="1"/>
</dbReference>
<dbReference type="PANTHER" id="PTHR23090">
    <property type="entry name" value="NH 3 /GLUTAMINE-DEPENDENT NAD + SYNTHETASE"/>
    <property type="match status" value="1"/>
</dbReference>
<dbReference type="PANTHER" id="PTHR23090:SF7">
    <property type="entry name" value="NH(3)-DEPENDENT NAD(+) SYNTHETASE"/>
    <property type="match status" value="1"/>
</dbReference>
<dbReference type="Pfam" id="PF02540">
    <property type="entry name" value="NAD_synthase"/>
    <property type="match status" value="1"/>
</dbReference>
<dbReference type="SUPFAM" id="SSF52402">
    <property type="entry name" value="Adenine nucleotide alpha hydrolases-like"/>
    <property type="match status" value="1"/>
</dbReference>
<proteinExistence type="inferred from homology"/>
<reference key="1">
    <citation type="submission" date="2006-03" db="EMBL/GenBank/DDBJ databases">
        <title>Complete sequence of Shewanella denitrificans OS217.</title>
        <authorList>
            <consortium name="US DOE Joint Genome Institute"/>
            <person name="Copeland A."/>
            <person name="Lucas S."/>
            <person name="Lapidus A."/>
            <person name="Barry K."/>
            <person name="Detter J.C."/>
            <person name="Glavina del Rio T."/>
            <person name="Hammon N."/>
            <person name="Israni S."/>
            <person name="Dalin E."/>
            <person name="Tice H."/>
            <person name="Pitluck S."/>
            <person name="Brettin T."/>
            <person name="Bruce D."/>
            <person name="Han C."/>
            <person name="Tapia R."/>
            <person name="Gilna P."/>
            <person name="Kiss H."/>
            <person name="Schmutz J."/>
            <person name="Larimer F."/>
            <person name="Land M."/>
            <person name="Hauser L."/>
            <person name="Kyrpides N."/>
            <person name="Lykidis A."/>
            <person name="Richardson P."/>
        </authorList>
    </citation>
    <scope>NUCLEOTIDE SEQUENCE [LARGE SCALE GENOMIC DNA]</scope>
    <source>
        <strain>OS217 / ATCC BAA-1090 / DSM 15013</strain>
    </source>
</reference>
<sequence>MKGQILREMKVLKAIEPEFEIARRVAFIKAKLIEAHSKTLVLGISGGVDSSLAGRLCQLAVNSLNQEKSTDSYQFIAVRLPYHVQKDEHEAQLACQFIQPSKLVTVNIHDGVVGVHNATLAGLDAAGLTHDSTKADFIKGNVKARMRMIAQYDIAGLVGGLVVGTDHSAENITGFYTKWGDGACDLAPLFGLNKRQVRQLAAFLGAPQVLVVKAPTADLEENKPQLEDEVALGLSYDAIDDFLEGKPVSQAVEDKLVAIYLRTQHKRQPIATIYD</sequence>
<accession>Q12PA8</accession>
<comment type="function">
    <text evidence="1">Catalyzes the ATP-dependent amidation of deamido-NAD to form NAD. Uses ammonia as a nitrogen source.</text>
</comment>
<comment type="catalytic activity">
    <reaction evidence="1">
        <text>deamido-NAD(+) + NH4(+) + ATP = AMP + diphosphate + NAD(+) + H(+)</text>
        <dbReference type="Rhea" id="RHEA:21188"/>
        <dbReference type="ChEBI" id="CHEBI:15378"/>
        <dbReference type="ChEBI" id="CHEBI:28938"/>
        <dbReference type="ChEBI" id="CHEBI:30616"/>
        <dbReference type="ChEBI" id="CHEBI:33019"/>
        <dbReference type="ChEBI" id="CHEBI:57540"/>
        <dbReference type="ChEBI" id="CHEBI:58437"/>
        <dbReference type="ChEBI" id="CHEBI:456215"/>
        <dbReference type="EC" id="6.3.1.5"/>
    </reaction>
</comment>
<comment type="pathway">
    <text evidence="1">Cofactor biosynthesis; NAD(+) biosynthesis; NAD(+) from deamido-NAD(+) (ammonia route): step 1/1.</text>
</comment>
<comment type="subunit">
    <text evidence="1">Homodimer.</text>
</comment>
<comment type="similarity">
    <text evidence="1">Belongs to the NAD synthetase family.</text>
</comment>
<organism>
    <name type="scientific">Shewanella denitrificans (strain OS217 / ATCC BAA-1090 / DSM 15013)</name>
    <dbReference type="NCBI Taxonomy" id="318161"/>
    <lineage>
        <taxon>Bacteria</taxon>
        <taxon>Pseudomonadati</taxon>
        <taxon>Pseudomonadota</taxon>
        <taxon>Gammaproteobacteria</taxon>
        <taxon>Alteromonadales</taxon>
        <taxon>Shewanellaceae</taxon>
        <taxon>Shewanella</taxon>
    </lineage>
</organism>
<protein>
    <recommendedName>
        <fullName evidence="1">NH(3)-dependent NAD(+) synthetase</fullName>
        <ecNumber evidence="1">6.3.1.5</ecNumber>
    </recommendedName>
</protein>